<proteinExistence type="evidence at protein level"/>
<reference key="1">
    <citation type="journal article" date="2000" name="Dev. Biol.">
        <title>Cell-substrate interactions during sea urchin gastrulation: migrating primary mesenchyme cells interact with and align extracellular matrix fibers that contain ECM3, a molecule with NG2-like and multiple calcium-binding domains.</title>
        <authorList>
            <person name="Hodor P.G."/>
            <person name="Illies M.R."/>
            <person name="Broadley S."/>
            <person name="Ettensohn C.A."/>
        </authorList>
    </citation>
    <scope>NUCLEOTIDE SEQUENCE [MRNA]</scope>
    <scope>SUBCELLULAR LOCATION</scope>
    <scope>TISSUE SPECIFICITY</scope>
</reference>
<reference key="2">
    <citation type="journal article" date="1995" name="Dev. Growth Differ.">
        <title>A spatially restricted molecule of the extracellular matrix is contributed both maternally and zygotically in the sea urchin embryo.</title>
        <authorList>
            <person name="Wessel G.M."/>
            <person name="Berg L."/>
        </authorList>
    </citation>
    <scope>NUCLEOTIDE SEQUENCE [MRNA] OF 489-1125</scope>
</reference>
<sequence length="3103" mass="343775">MASALLCFLAAILPGMIAAQNTWVLGTSDVRTVEPVNPVGGGVSLGGIDIDSTENRIIVQNTGIAVPFGREKAIDPNSELVINVQAGDSCSIKVLPRQSDPLSQIPGRLVPPSFPCDFSPGEVKYVHFGSRKPQTDKVKLQLRYDTATDVYIIPFTIDVRVESKQLEIVTRNVPLVVQDLMGTSDALDADKLEFEFDSNTEVCKVTVLSSTSGLPRYGEVMNHDEQGQMIDCNDFLELGIQYRHTAATSSPREDYIPLVVELQNQQGQVIKQEYFQSMVRIIDGDDNTPPSLVLSSDMMMEVDQFVMTAITPSILAAEDVETPADMLIFNITSQTLGPDDGMIVSTDDRNQPITSFTQKDLRDLKIAYKPPPRDTDVQTIYQIELEIVDSELATSETHSLLIVVKPKNTLAPVVTTNTGLVLFEGQSRPLLGGQNLGISDEDNLQDVIIAPINGSRYGELRIGNQRIKQFTIADLIEGAVTYHHYGTDTYSDNIIFRMTDGQHEVEFLFPITIAPIDDEAPIVDVNTGVTVNENEVVAITNFVLSATDIDSDDSEIRFVLEQPLSDMGNLFLRQVNIPEDPQNWISQDNFYEREVTEFTLEDIQNGHLFYQHGGSHNADPVFDRILFRVVDSADPQPNESPVQELLVKVMPQDLQPPEMFGGTTLQLSVDEFQITPILKKNLRFTDMDSNDRELKYTIVSPLTDSDSNNNLPVGDIVLTDEPNTPINMFTQAQINHMKVSYKPPSTELGIAPRAITFQFVVQDTQGNMGSPHNFIILLRPVDNQPPTITNTGVQVFERGTVIIDQTMLDATDPDTDRNSIRVVLVQPPVFGTMNLNDIALEKGDEFTLGDIENSRVKYVSGDAEEQSDEIHLEITDGVHVVPIVIHINVAPIDDEAPTLDLPPGTIGSFLEVQENSFSLITSNILSASDPDTEDLLLTFIVDRQPNEGRIESNGVVADVFTQQDIVNGLVRYVHTGGEIGPSKRDDSFNLTLSDMSPDWILGGNEITQVEVYVTVLPVDNLAPNVTMGVQFYVDEAGKGNINMTHLQAPDVDTEDDDILCTIVVAPSVGYLENISPAPGSEKSRGGMPISAFSIKDLRLNHINYVQSIHQGMEPEEDQFTFRCTDGVNESPNFLFPINIIPVNDEEPQVYAREIIVDEGGQRIIDEPLLRAEDGDVPADELHFFIVTPPQHGTITYTRLEGDIPILNFTMDQIANGNDIKYIHDDSETTEDSFTVLLTDGKYEITKEITITILEVDDETPRLTINDGIDIEIGESRIISNRILKATDLDSADSNLTYTVRYAPEKGLLQRLSKFDGSVVENITLGMNFTQWEVDNQRIRYVHTDGDGGRDLIKFDITDGTNPLIDRYFYVTVDHIDNVHPSIINAGVTMQEGSRVTLTTSIISTSDLNSPDEDLLFTITTAPTKGHLESTDNPGMPINSFTQLDLAGSKIYYVHTADDEVKMDSFQFQVTDGFNTVVRTFRISFTDVDNKEPVVRYDTIRLQEGDNKLITPFELGIDDRDTPANELRFTITQLPIHGNILRNNTALVTEFTMHDINENLISYQHDGSEQTADSFSFIVTDGTHNEFYVLPDITTLTRQPQQVPIEIVPVDNGAPQIVVNRGAPTLDLLGTGELGFMITNKYLMSEDRDSVDNSLLYVITTQPQHGYIMNIALGNISITNFTQSDVNNMYIQYIVYPNVDATSDTFFVEVRDAGGNTLPNQPFRLNWSWISLEKEYYEVNETERYLNIKLVRRGYLGETSFVGIQTADGTAIADEDFRGKSARQVQFNPGQTEGFWRVRILNDRLYEQAEVFEIILHDPVMGALEYPDRAVVTIFDAEDESGVFIDLPDNYVIEEDIGEFLVPIRRTGDLSQELMASCSTMPGSATGSDPSPVLSFSDYISRMEEDPDNMVAFDKGEDLAYCRILIIDDSLYEEDETFQVKLSNPMGGRIGNPSAINVIIAGDTDDVPSFYFGEPEYKVDENAPFVEVTVFRTGTDVSKMASVTVRSRASNPVSAVAGEDYAGISRNLDFAPGVNQQTVKVYIIDDRGQPRLEGPETFELVLNMPMNGVLGAPSKTVITINDTISDLPKVEFRHPTYEVNENDIRITAEVVRSGDLSIESSVRCYTRQGSAQVMMDYDERPNTEASIITFLPGERSKTCTVLLMDDNVFEPDEAFRLVLGSPRTASGVPAVVGEQNVTVVTVHDVGDAPIIKFPETKFSIDEPTDLDSVVTVSIPVIRMGDNTQTSIVRVFTKDGSARSGIDYNPLSQVLEFGFNVTERVVEIEILPDEDRNEMREAFTLHITNDQMMIADVQMNHAIIYIEQEGQASGVTFPSQPVVVSLLDYDDIPNARTNPPRGYPLICVSPCNPKYPDFATTGPICDSEGLNDTVTQFRWMVSAPTSESGVTSPLRQTDSDTFFSSTKSITLDSVYFGPGSRVQCVARAVGSEGDAGREHPSNSIVISTTDGMCMPRVANAIGAEPFTARMRYTGPADPDYPNKVRLTVTMPHVDGMLPVISTRQLSNFELALSKDGYRVGTHRCSNLLDYNEIPTDFGFITEETKNPNVVGDTYAYQYSPELRGEETLRFYRNLNLEACLWEFNAYYDMSELLDECGGLVGTDGQVLDLVQSYVSMRIPLFVSFVFHSPVATGGWKHFDQQSTLQLTFVYDTSILWQNGIGSQVTTGTQSLQGNLYPTSMRIDEDGRLVVNFRTEALFNGLFVQSHQSTDVVSTVNSIDHPGITYSLSLLRTEPTYAQPEQLWQFVSDLSVSDYSGTYTIQLVPCTTLPNTVYSQPPVCNPEDIITFELPIRFQQVSDPVPEEYSLNTEFVLVGKESIYLSDGSMGFGEGSDVAYNPGDTIFGRIHVDPVQNLGAGFNLDIQKVFLCTGRDGYIPKYNPAANEYGCVADTPNLLYAFKILDRGAPDTIVREFNGLPFNATLAIDNAADLELVQQPGADGFRLASDALFEVDYGRTWYLHSIYSMRSSESSGIGKRETEHHAISSRQRRQANSEALVDPAQGQGTNMKRVALQGPQDVDNNLGGTYELAPKGTNVVMIAVVIGVILIILLVALVIGVVVRRRQAKQQPVVVVNGSAKVVSNVHFDDNTEV</sequence>
<comment type="function">
    <text>Extracellular matrix protein that may serve as substrate for the migratory primary mesenchyme cells (PMCs), the interaction possibly providing guidance information to migrating PMCs.</text>
</comment>
<comment type="subcellular location">
    <subcellularLocation>
        <location evidence="5">Cell membrane</location>
        <topology evidence="5">Single-pass type I membrane protein</topology>
        <orientation evidence="5">Extracellular side</orientation>
    </subcellularLocation>
</comment>
<comment type="tissue specificity">
    <text evidence="5">Component of extracellular matrix fibers that interact with PMC filopodia during gastrulation (at protein level).</text>
</comment>
<comment type="domain">
    <text evidence="1">The Calx-beta domains bind calcium with high affinity and undergo a major conformational shift upon binding.</text>
</comment>
<comment type="similarity">
    <text evidence="6">Belongs to the FRAS1 family.</text>
</comment>
<organism>
    <name type="scientific">Lytechinus variegatus</name>
    <name type="common">Green sea urchin</name>
    <name type="synonym">Echinus variegatus</name>
    <dbReference type="NCBI Taxonomy" id="7654"/>
    <lineage>
        <taxon>Eukaryota</taxon>
        <taxon>Metazoa</taxon>
        <taxon>Echinodermata</taxon>
        <taxon>Eleutherozoa</taxon>
        <taxon>Echinozoa</taxon>
        <taxon>Echinoidea</taxon>
        <taxon>Euechinoidea</taxon>
        <taxon>Echinacea</taxon>
        <taxon>Temnopleuroida</taxon>
        <taxon>Toxopneustidae</taxon>
        <taxon>Lytechinus</taxon>
    </lineage>
</organism>
<accession>Q9GV77</accession>
<accession>Q25429</accession>
<evidence type="ECO:0000250" key="1"/>
<evidence type="ECO:0000255" key="2"/>
<evidence type="ECO:0000255" key="3">
    <source>
        <dbReference type="PROSITE-ProRule" id="PRU01201"/>
    </source>
</evidence>
<evidence type="ECO:0000256" key="4">
    <source>
        <dbReference type="SAM" id="MobiDB-lite"/>
    </source>
</evidence>
<evidence type="ECO:0000269" key="5">
    <source>
    </source>
</evidence>
<evidence type="ECO:0000305" key="6"/>
<dbReference type="EMBL" id="AF287478">
    <property type="protein sequence ID" value="AAG00570.1"/>
    <property type="molecule type" value="mRNA"/>
</dbReference>
<dbReference type="EMBL" id="U34202">
    <property type="protein sequence ID" value="AAA77050.2"/>
    <property type="molecule type" value="mRNA"/>
</dbReference>
<dbReference type="GlyCosmos" id="Q9GV77">
    <property type="glycosylation" value="19 sites, No reported glycans"/>
</dbReference>
<dbReference type="EnsemblMetazoa" id="XM_041605225.1">
    <property type="protein sequence ID" value="XP_041461159.1"/>
    <property type="gene ID" value="LOC446166"/>
</dbReference>
<dbReference type="OrthoDB" id="430044at2759"/>
<dbReference type="GO" id="GO:0005886">
    <property type="term" value="C:plasma membrane"/>
    <property type="evidence" value="ECO:0007669"/>
    <property type="project" value="UniProtKB-SubCell"/>
</dbReference>
<dbReference type="GO" id="GO:0005509">
    <property type="term" value="F:calcium ion binding"/>
    <property type="evidence" value="ECO:0007669"/>
    <property type="project" value="InterPro"/>
</dbReference>
<dbReference type="GO" id="GO:0009653">
    <property type="term" value="P:anatomical structure morphogenesis"/>
    <property type="evidence" value="ECO:0007669"/>
    <property type="project" value="TreeGrafter"/>
</dbReference>
<dbReference type="GO" id="GO:0007154">
    <property type="term" value="P:cell communication"/>
    <property type="evidence" value="ECO:0007669"/>
    <property type="project" value="InterPro"/>
</dbReference>
<dbReference type="GO" id="GO:0007156">
    <property type="term" value="P:homophilic cell adhesion via plasma membrane adhesion molecules"/>
    <property type="evidence" value="ECO:0007669"/>
    <property type="project" value="InterPro"/>
</dbReference>
<dbReference type="CDD" id="cd12087">
    <property type="entry name" value="TM_EGFR-like"/>
    <property type="match status" value="1"/>
</dbReference>
<dbReference type="Gene3D" id="2.60.40.2030">
    <property type="match status" value="5"/>
</dbReference>
<dbReference type="InterPro" id="IPR002126">
    <property type="entry name" value="Cadherin-like_dom"/>
</dbReference>
<dbReference type="InterPro" id="IPR038081">
    <property type="entry name" value="CalX-like_sf"/>
</dbReference>
<dbReference type="InterPro" id="IPR003644">
    <property type="entry name" value="Calx_beta"/>
</dbReference>
<dbReference type="InterPro" id="IPR039005">
    <property type="entry name" value="CSPG_rpt"/>
</dbReference>
<dbReference type="InterPro" id="IPR045658">
    <property type="entry name" value="FRAS1-rel_N"/>
</dbReference>
<dbReference type="InterPro" id="IPR051561">
    <property type="entry name" value="FRAS1_ECM"/>
</dbReference>
<dbReference type="PANTHER" id="PTHR45739:SF8">
    <property type="entry name" value="FRAS1-RELATED EXTRACELLULAR MATRIX PROTEIN 1"/>
    <property type="match status" value="1"/>
</dbReference>
<dbReference type="PANTHER" id="PTHR45739">
    <property type="entry name" value="MATRIX PROTEIN, PUTATIVE-RELATED"/>
    <property type="match status" value="1"/>
</dbReference>
<dbReference type="Pfam" id="PF16184">
    <property type="entry name" value="Cadherin_3"/>
    <property type="match status" value="12"/>
</dbReference>
<dbReference type="Pfam" id="PF03160">
    <property type="entry name" value="Calx-beta"/>
    <property type="match status" value="5"/>
</dbReference>
<dbReference type="Pfam" id="PF19309">
    <property type="entry name" value="Frem_N"/>
    <property type="match status" value="1"/>
</dbReference>
<dbReference type="SMART" id="SM00237">
    <property type="entry name" value="Calx_beta"/>
    <property type="match status" value="5"/>
</dbReference>
<dbReference type="SUPFAM" id="SSF141072">
    <property type="entry name" value="CalX-like"/>
    <property type="match status" value="5"/>
</dbReference>
<dbReference type="PROSITE" id="PS51854">
    <property type="entry name" value="CSPG"/>
    <property type="match status" value="12"/>
</dbReference>
<feature type="signal peptide" evidence="2">
    <location>
        <begin position="1"/>
        <end position="19"/>
    </location>
</feature>
<feature type="chain" id="PRO_0000010126" description="Extracellular matrix protein 3">
    <location>
        <begin position="20"/>
        <end position="3103"/>
    </location>
</feature>
<feature type="topological domain" description="Extracellular" evidence="2">
    <location>
        <begin position="20"/>
        <end position="3047"/>
    </location>
</feature>
<feature type="transmembrane region" description="Helical" evidence="2">
    <location>
        <begin position="3048"/>
        <end position="3068"/>
    </location>
</feature>
<feature type="topological domain" description="Cytoplasmic" evidence="2">
    <location>
        <begin position="3069"/>
        <end position="3103"/>
    </location>
</feature>
<feature type="repeat" description="CSPG 1" evidence="3">
    <location>
        <begin position="289"/>
        <end position="388"/>
    </location>
</feature>
<feature type="repeat" description="CSPG 2" evidence="3">
    <location>
        <begin position="411"/>
        <end position="499"/>
    </location>
</feature>
<feature type="repeat" description="CSPG 3" evidence="3">
    <location>
        <begin position="520"/>
        <end position="630"/>
    </location>
</feature>
<feature type="repeat" description="CSPG 4" evidence="3">
    <location>
        <begin position="656"/>
        <end position="762"/>
    </location>
</feature>
<feature type="repeat" description="CSPG 5" evidence="3">
    <location>
        <begin position="784"/>
        <end position="875"/>
    </location>
</feature>
<feature type="repeat" description="CSPG 6" evidence="3">
    <location>
        <begin position="901"/>
        <end position="993"/>
    </location>
</feature>
<feature type="repeat" description="CSPG 7" evidence="3">
    <location>
        <begin position="1022"/>
        <end position="1124"/>
    </location>
</feature>
<feature type="repeat" description="CSPG 8" evidence="3">
    <location>
        <begin position="1145"/>
        <end position="1238"/>
    </location>
</feature>
<feature type="repeat" description="CSPG 9" evidence="3">
    <location>
        <begin position="1259"/>
        <end position="1357"/>
    </location>
</feature>
<feature type="repeat" description="CSPG 10" evidence="3">
    <location>
        <begin position="1378"/>
        <end position="1470"/>
    </location>
</feature>
<feature type="repeat" description="CSPG 11" evidence="3">
    <location>
        <begin position="1490"/>
        <end position="1579"/>
    </location>
</feature>
<feature type="repeat" description="CSPG 12" evidence="3">
    <location>
        <begin position="1613"/>
        <end position="1710"/>
    </location>
</feature>
<feature type="domain" description="Calx-beta 1">
    <location>
        <begin position="1717"/>
        <end position="1816"/>
    </location>
</feature>
<feature type="domain" description="Calx-beta 2">
    <location>
        <begin position="1829"/>
        <end position="1942"/>
    </location>
</feature>
<feature type="domain" description="Calx-beta 3">
    <location>
        <begin position="1956"/>
        <end position="2062"/>
    </location>
</feature>
<feature type="domain" description="Calx-beta 4">
    <location>
        <begin position="2077"/>
        <end position="2179"/>
    </location>
</feature>
<feature type="domain" description="Calx-beta 5">
    <location>
        <begin position="2197"/>
        <end position="2302"/>
    </location>
</feature>
<feature type="region of interest" description="Disordered" evidence="4">
    <location>
        <begin position="2983"/>
        <end position="3013"/>
    </location>
</feature>
<feature type="glycosylation site" description="N-linked (GlcNAc...) asparagine" evidence="2">
    <location>
        <position position="330"/>
    </location>
</feature>
<feature type="glycosylation site" description="N-linked (GlcNAc...) asparagine" evidence="2">
    <location>
        <position position="453"/>
    </location>
</feature>
<feature type="glycosylation site" description="N-linked (GlcNAc...) asparagine" evidence="2">
    <location>
        <position position="989"/>
    </location>
</feature>
<feature type="glycosylation site" description="N-linked (GlcNAc...) asparagine" evidence="2">
    <location>
        <position position="1024"/>
    </location>
</feature>
<feature type="glycosylation site" description="N-linked (GlcNAc...) asparagine" evidence="2">
    <location>
        <position position="1042"/>
    </location>
</feature>
<feature type="glycosylation site" description="N-linked (GlcNAc...) asparagine" evidence="2">
    <location>
        <position position="1207"/>
    </location>
</feature>
<feature type="glycosylation site" description="N-linked (GlcNAc...) asparagine" evidence="2">
    <location>
        <position position="1294"/>
    </location>
</feature>
<feature type="glycosylation site" description="N-linked (GlcNAc...) asparagine" evidence="2">
    <location>
        <position position="1321"/>
    </location>
</feature>
<feature type="glycosylation site" description="N-linked (GlcNAc...) asparagine" evidence="2">
    <location>
        <position position="1327"/>
    </location>
</feature>
<feature type="glycosylation site" description="N-linked (GlcNAc...) asparagine" evidence="2">
    <location>
        <position position="1542"/>
    </location>
</feature>
<feature type="glycosylation site" description="N-linked (GlcNAc...) asparagine" evidence="2">
    <location>
        <position position="1674"/>
    </location>
</feature>
<feature type="glycosylation site" description="N-linked (GlcNAc...) asparagine" evidence="2">
    <location>
        <position position="1679"/>
    </location>
</feature>
<feature type="glycosylation site" description="N-linked (GlcNAc...) asparagine" evidence="2">
    <location>
        <position position="1725"/>
    </location>
</feature>
<feature type="glycosylation site" description="N-linked (GlcNAc...) asparagine" evidence="2">
    <location>
        <position position="1739"/>
    </location>
</feature>
<feature type="glycosylation site" description="N-linked (GlcNAc...) asparagine" evidence="2">
    <location>
        <position position="2080"/>
    </location>
</feature>
<feature type="glycosylation site" description="N-linked (GlcNAc...) asparagine" evidence="2">
    <location>
        <position position="2195"/>
    </location>
</feature>
<feature type="glycosylation site" description="N-linked (GlcNAc...) asparagine" evidence="2">
    <location>
        <position position="2274"/>
    </location>
</feature>
<feature type="glycosylation site" description="N-linked (GlcNAc...) asparagine" evidence="2">
    <location>
        <position position="2385"/>
    </location>
</feature>
<feature type="glycosylation site" description="N-linked (GlcNAc...) asparagine" evidence="2">
    <location>
        <position position="2932"/>
    </location>
</feature>
<feature type="sequence conflict" description="In Ref. 2; AAA77050." evidence="6" ref="2">
    <original>TYSDNIIFRMTD</original>
    <variation>KCKYVYEKGIPF</variation>
    <location>
        <begin position="489"/>
        <end position="500"/>
    </location>
</feature>
<feature type="sequence conflict" description="In Ref. 2; AAA77050." evidence="6" ref="2">
    <original>S</original>
    <variation>P</variation>
    <location>
        <position position="554"/>
    </location>
</feature>
<feature type="sequence conflict" description="In Ref. 2; AAA77050." evidence="6" ref="2">
    <original>L</original>
    <variation>V</variation>
    <location>
        <position position="778"/>
    </location>
</feature>
<feature type="sequence conflict" description="In Ref. 2; AAA77050." evidence="6" ref="2">
    <original>L</original>
    <variation>H</variation>
    <location>
        <position position="1046"/>
    </location>
</feature>
<feature type="sequence conflict" description="In Ref. 2; AAA77050." evidence="6" ref="2">
    <original>M</original>
    <variation>I</variation>
    <location>
        <position position="1112"/>
    </location>
</feature>
<feature type="sequence conflict" description="In Ref. 2; AAA77050." evidence="6" ref="2">
    <original>QFTFRCTD</original>
    <variation>HSLSVVLM</variation>
    <location>
        <begin position="1118"/>
        <end position="1125"/>
    </location>
</feature>
<keyword id="KW-0106">Calcium</keyword>
<keyword id="KW-0130">Cell adhesion</keyword>
<keyword id="KW-1003">Cell membrane</keyword>
<keyword id="KW-0217">Developmental protein</keyword>
<keyword id="KW-0325">Glycoprotein</keyword>
<keyword id="KW-0472">Membrane</keyword>
<keyword id="KW-0479">Metal-binding</keyword>
<keyword id="KW-0677">Repeat</keyword>
<keyword id="KW-0732">Signal</keyword>
<keyword id="KW-0812">Transmembrane</keyword>
<keyword id="KW-1133">Transmembrane helix</keyword>
<name>FREM2_LYTVA</name>
<protein>
    <recommendedName>
        <fullName>Extracellular matrix protein 3</fullName>
    </recommendedName>
    <alternativeName>
        <fullName>FREM2 homolog</fullName>
    </alternativeName>
</protein>
<gene>
    <name type="primary">ECM3</name>
</gene>